<name>BAT36_CAEEL</name>
<keyword id="KW-1185">Reference proteome</keyword>
<reference key="1">
    <citation type="journal article" date="1998" name="Science">
        <title>Genome sequence of the nematode C. elegans: a platform for investigating biology.</title>
        <authorList>
            <consortium name="The C. elegans sequencing consortium"/>
        </authorList>
    </citation>
    <scope>NUCLEOTIDE SEQUENCE [LARGE SCALE GENOMIC DNA]</scope>
    <source>
        <strain>Bristol N2</strain>
    </source>
</reference>
<feature type="chain" id="PRO_0000246698" description="BTB and MATH domain-containing protein 36">
    <location>
        <begin position="1"/>
        <end position="320"/>
    </location>
</feature>
<feature type="domain" description="MATH" evidence="2">
    <location>
        <begin position="7"/>
        <end position="136"/>
    </location>
</feature>
<feature type="domain" description="BTB" evidence="1">
    <location>
        <begin position="160"/>
        <end position="227"/>
    </location>
</feature>
<organism>
    <name type="scientific">Caenorhabditis elegans</name>
    <dbReference type="NCBI Taxonomy" id="6239"/>
    <lineage>
        <taxon>Eukaryota</taxon>
        <taxon>Metazoa</taxon>
        <taxon>Ecdysozoa</taxon>
        <taxon>Nematoda</taxon>
        <taxon>Chromadorea</taxon>
        <taxon>Rhabditida</taxon>
        <taxon>Rhabditina</taxon>
        <taxon>Rhabditomorpha</taxon>
        <taxon>Rhabditoidea</taxon>
        <taxon>Rhabditidae</taxon>
        <taxon>Peloderinae</taxon>
        <taxon>Caenorhabditis</taxon>
    </lineage>
</organism>
<gene>
    <name type="primary">bath-36</name>
    <name type="ORF">Y75B12B.4</name>
</gene>
<sequence>MSGKDNKGSIRFEIQNFSGLAKATEHKPVQIGHVEWILGAFTSTSDATNNAKHLGIHLKCNEELRSNLWSCDASIRFSLLRLNSNEDDDAFSMEFQQKFDDLNKIVVVNNFKNWEEAICYDNRFVLDKHAVLEVQITVNKIAGIHERIIETFDQPKEHLTDVVLVLEGKHVHVGKQVLATSSQFFQKMFYSNFAEKTQAEIKIDDVTHSEFIDLLNVIYPTHMLINSSNVSHLLKLSDRFAVPRVLEKAETFLILDQKTHLIDKLKFAEVYRLSRLQNACLSQLETSEDVTALKHHENYKSLDHITYNALLQKLIDLLED</sequence>
<accession>Q9XWB9</accession>
<proteinExistence type="predicted"/>
<dbReference type="EMBL" id="AL032663">
    <property type="protein sequence ID" value="CAA21761.1"/>
    <property type="molecule type" value="Genomic_DNA"/>
</dbReference>
<dbReference type="PIR" id="T27372">
    <property type="entry name" value="T27372"/>
</dbReference>
<dbReference type="RefSeq" id="NP_506750.1">
    <property type="nucleotide sequence ID" value="NM_074349.5"/>
</dbReference>
<dbReference type="SMR" id="Q9XWB9"/>
<dbReference type="FunCoup" id="Q9XWB9">
    <property type="interactions" value="1"/>
</dbReference>
<dbReference type="STRING" id="6239.Y75B12B.4.1"/>
<dbReference type="PaxDb" id="6239-Y75B12B.4"/>
<dbReference type="EnsemblMetazoa" id="Y75B12B.4.1">
    <property type="protein sequence ID" value="Y75B12B.4.1"/>
    <property type="gene ID" value="WBGene00013569"/>
</dbReference>
<dbReference type="GeneID" id="190718"/>
<dbReference type="KEGG" id="cel:CELE_Y75B12B.4"/>
<dbReference type="UCSC" id="Y75B12B.4">
    <property type="organism name" value="c. elegans"/>
</dbReference>
<dbReference type="AGR" id="WB:WBGene00013569"/>
<dbReference type="CTD" id="190718"/>
<dbReference type="WormBase" id="Y75B12B.4">
    <property type="protein sequence ID" value="CE20373"/>
    <property type="gene ID" value="WBGene00013569"/>
    <property type="gene designation" value="bath-36"/>
</dbReference>
<dbReference type="eggNOG" id="ENOG502QSZD">
    <property type="taxonomic scope" value="Eukaryota"/>
</dbReference>
<dbReference type="GeneTree" id="ENSGT00970000196035"/>
<dbReference type="HOGENOM" id="CLU_051249_0_0_1"/>
<dbReference type="InParanoid" id="Q9XWB9"/>
<dbReference type="OMA" id="WRADATI"/>
<dbReference type="OrthoDB" id="531008at2759"/>
<dbReference type="PhylomeDB" id="Q9XWB9"/>
<dbReference type="PRO" id="PR:Q9XWB9"/>
<dbReference type="Proteomes" id="UP000001940">
    <property type="component" value="Chromosome V"/>
</dbReference>
<dbReference type="Bgee" id="WBGene00013569">
    <property type="expression patterns" value="Expressed in germ line (C elegans) and 3 other cell types or tissues"/>
</dbReference>
<dbReference type="CDD" id="cd18186">
    <property type="entry name" value="BTB_POZ_ZBTB_KLHL-like"/>
    <property type="match status" value="1"/>
</dbReference>
<dbReference type="Gene3D" id="2.60.210.10">
    <property type="entry name" value="Apoptosis, Tumor Necrosis Factor Receptor Associated Protein 2, Chain A"/>
    <property type="match status" value="1"/>
</dbReference>
<dbReference type="Gene3D" id="3.30.710.10">
    <property type="entry name" value="Potassium Channel Kv1.1, Chain A"/>
    <property type="match status" value="1"/>
</dbReference>
<dbReference type="InterPro" id="IPR000210">
    <property type="entry name" value="BTB/POZ_dom"/>
</dbReference>
<dbReference type="InterPro" id="IPR002083">
    <property type="entry name" value="MATH/TRAF_dom"/>
</dbReference>
<dbReference type="InterPro" id="IPR011333">
    <property type="entry name" value="SKP1/BTB/POZ_sf"/>
</dbReference>
<dbReference type="InterPro" id="IPR008974">
    <property type="entry name" value="TRAF-like"/>
</dbReference>
<dbReference type="PANTHER" id="PTHR47022">
    <property type="entry name" value="BTB AND MATH DOMAIN-CONTAINING PROTEIN 36-RELATED"/>
    <property type="match status" value="1"/>
</dbReference>
<dbReference type="PANTHER" id="PTHR47022:SF1">
    <property type="entry name" value="BTB AND MATH DOMAIN-CONTAINING PROTEIN 36-RELATED"/>
    <property type="match status" value="1"/>
</dbReference>
<dbReference type="Pfam" id="PF00651">
    <property type="entry name" value="BTB"/>
    <property type="match status" value="1"/>
</dbReference>
<dbReference type="Pfam" id="PF00917">
    <property type="entry name" value="MATH"/>
    <property type="match status" value="1"/>
</dbReference>
<dbReference type="SMART" id="SM00225">
    <property type="entry name" value="BTB"/>
    <property type="match status" value="1"/>
</dbReference>
<dbReference type="SMART" id="SM00061">
    <property type="entry name" value="MATH"/>
    <property type="match status" value="1"/>
</dbReference>
<dbReference type="SUPFAM" id="SSF54695">
    <property type="entry name" value="POZ domain"/>
    <property type="match status" value="1"/>
</dbReference>
<dbReference type="SUPFAM" id="SSF49599">
    <property type="entry name" value="TRAF domain-like"/>
    <property type="match status" value="1"/>
</dbReference>
<dbReference type="PROSITE" id="PS50097">
    <property type="entry name" value="BTB"/>
    <property type="match status" value="1"/>
</dbReference>
<dbReference type="PROSITE" id="PS50144">
    <property type="entry name" value="MATH"/>
    <property type="match status" value="1"/>
</dbReference>
<protein>
    <recommendedName>
        <fullName>BTB and MATH domain-containing protein 36</fullName>
    </recommendedName>
</protein>
<evidence type="ECO:0000255" key="1">
    <source>
        <dbReference type="PROSITE-ProRule" id="PRU00037"/>
    </source>
</evidence>
<evidence type="ECO:0000255" key="2">
    <source>
        <dbReference type="PROSITE-ProRule" id="PRU00129"/>
    </source>
</evidence>